<dbReference type="EMBL" id="AL935263">
    <property type="protein sequence ID" value="CCC77583.1"/>
    <property type="molecule type" value="Genomic_DNA"/>
</dbReference>
<dbReference type="RefSeq" id="WP_003641631.1">
    <property type="nucleotide sequence ID" value="NC_004567.2"/>
</dbReference>
<dbReference type="RefSeq" id="YP_004888097.1">
    <property type="nucleotide sequence ID" value="NC_004567.2"/>
</dbReference>
<dbReference type="SMR" id="Q890K5"/>
<dbReference type="STRING" id="220668.lp_0005"/>
<dbReference type="EnsemblBacteria" id="CCC77583">
    <property type="protein sequence ID" value="CCC77583"/>
    <property type="gene ID" value="lp_0005"/>
</dbReference>
<dbReference type="GeneID" id="77216687"/>
<dbReference type="KEGG" id="lpl:lp_0005"/>
<dbReference type="PATRIC" id="fig|220668.9.peg.4"/>
<dbReference type="eggNOG" id="COG1195">
    <property type="taxonomic scope" value="Bacteria"/>
</dbReference>
<dbReference type="HOGENOM" id="CLU_040267_0_1_9"/>
<dbReference type="OrthoDB" id="9803889at2"/>
<dbReference type="PhylomeDB" id="Q890K5"/>
<dbReference type="Proteomes" id="UP000000432">
    <property type="component" value="Chromosome"/>
</dbReference>
<dbReference type="GO" id="GO:0005737">
    <property type="term" value="C:cytoplasm"/>
    <property type="evidence" value="ECO:0007669"/>
    <property type="project" value="UniProtKB-SubCell"/>
</dbReference>
<dbReference type="GO" id="GO:0005524">
    <property type="term" value="F:ATP binding"/>
    <property type="evidence" value="ECO:0007669"/>
    <property type="project" value="UniProtKB-UniRule"/>
</dbReference>
<dbReference type="GO" id="GO:0003697">
    <property type="term" value="F:single-stranded DNA binding"/>
    <property type="evidence" value="ECO:0007669"/>
    <property type="project" value="UniProtKB-UniRule"/>
</dbReference>
<dbReference type="GO" id="GO:0006260">
    <property type="term" value="P:DNA replication"/>
    <property type="evidence" value="ECO:0007669"/>
    <property type="project" value="UniProtKB-UniRule"/>
</dbReference>
<dbReference type="GO" id="GO:0000731">
    <property type="term" value="P:DNA synthesis involved in DNA repair"/>
    <property type="evidence" value="ECO:0007669"/>
    <property type="project" value="TreeGrafter"/>
</dbReference>
<dbReference type="GO" id="GO:0006302">
    <property type="term" value="P:double-strand break repair"/>
    <property type="evidence" value="ECO:0007669"/>
    <property type="project" value="TreeGrafter"/>
</dbReference>
<dbReference type="GO" id="GO:0009432">
    <property type="term" value="P:SOS response"/>
    <property type="evidence" value="ECO:0007669"/>
    <property type="project" value="UniProtKB-UniRule"/>
</dbReference>
<dbReference type="CDD" id="cd03242">
    <property type="entry name" value="ABC_RecF"/>
    <property type="match status" value="1"/>
</dbReference>
<dbReference type="FunFam" id="1.20.1050.90:FF:000002">
    <property type="entry name" value="DNA replication and repair protein RecF"/>
    <property type="match status" value="1"/>
</dbReference>
<dbReference type="Gene3D" id="3.40.50.300">
    <property type="entry name" value="P-loop containing nucleotide triphosphate hydrolases"/>
    <property type="match status" value="1"/>
</dbReference>
<dbReference type="Gene3D" id="1.20.1050.90">
    <property type="entry name" value="RecF/RecN/SMC, N-terminal domain"/>
    <property type="match status" value="1"/>
</dbReference>
<dbReference type="HAMAP" id="MF_00365">
    <property type="entry name" value="RecF"/>
    <property type="match status" value="1"/>
</dbReference>
<dbReference type="InterPro" id="IPR001238">
    <property type="entry name" value="DNA-binding_RecF"/>
</dbReference>
<dbReference type="InterPro" id="IPR018078">
    <property type="entry name" value="DNA-binding_RecF_CS"/>
</dbReference>
<dbReference type="InterPro" id="IPR027417">
    <property type="entry name" value="P-loop_NTPase"/>
</dbReference>
<dbReference type="InterPro" id="IPR003395">
    <property type="entry name" value="RecF/RecN/SMC_N"/>
</dbReference>
<dbReference type="InterPro" id="IPR042174">
    <property type="entry name" value="RecF_2"/>
</dbReference>
<dbReference type="NCBIfam" id="TIGR00611">
    <property type="entry name" value="recf"/>
    <property type="match status" value="1"/>
</dbReference>
<dbReference type="PANTHER" id="PTHR32182">
    <property type="entry name" value="DNA REPLICATION AND REPAIR PROTEIN RECF"/>
    <property type="match status" value="1"/>
</dbReference>
<dbReference type="PANTHER" id="PTHR32182:SF0">
    <property type="entry name" value="DNA REPLICATION AND REPAIR PROTEIN RECF"/>
    <property type="match status" value="1"/>
</dbReference>
<dbReference type="Pfam" id="PF02463">
    <property type="entry name" value="SMC_N"/>
    <property type="match status" value="1"/>
</dbReference>
<dbReference type="SUPFAM" id="SSF52540">
    <property type="entry name" value="P-loop containing nucleoside triphosphate hydrolases"/>
    <property type="match status" value="1"/>
</dbReference>
<dbReference type="PROSITE" id="PS00617">
    <property type="entry name" value="RECF_1"/>
    <property type="match status" value="1"/>
</dbReference>
<dbReference type="PROSITE" id="PS00618">
    <property type="entry name" value="RECF_2"/>
    <property type="match status" value="1"/>
</dbReference>
<organism>
    <name type="scientific">Lactiplantibacillus plantarum (strain ATCC BAA-793 / NCIMB 8826 / WCFS1)</name>
    <name type="common">Lactobacillus plantarum</name>
    <dbReference type="NCBI Taxonomy" id="220668"/>
    <lineage>
        <taxon>Bacteria</taxon>
        <taxon>Bacillati</taxon>
        <taxon>Bacillota</taxon>
        <taxon>Bacilli</taxon>
        <taxon>Lactobacillales</taxon>
        <taxon>Lactobacillaceae</taxon>
        <taxon>Lactiplantibacillus</taxon>
    </lineage>
</organism>
<accession>Q890K5</accession>
<accession>F9US36</accession>
<feature type="chain" id="PRO_0000196424" description="DNA replication and repair protein RecF">
    <location>
        <begin position="1"/>
        <end position="374"/>
    </location>
</feature>
<feature type="binding site" evidence="1">
    <location>
        <begin position="30"/>
        <end position="37"/>
    </location>
    <ligand>
        <name>ATP</name>
        <dbReference type="ChEBI" id="CHEBI:30616"/>
    </ligand>
</feature>
<reference key="1">
    <citation type="journal article" date="2003" name="Proc. Natl. Acad. Sci. U.S.A.">
        <title>Complete genome sequence of Lactobacillus plantarum WCFS1.</title>
        <authorList>
            <person name="Kleerebezem M."/>
            <person name="Boekhorst J."/>
            <person name="van Kranenburg R."/>
            <person name="Molenaar D."/>
            <person name="Kuipers O.P."/>
            <person name="Leer R."/>
            <person name="Tarchini R."/>
            <person name="Peters S.A."/>
            <person name="Sandbrink H.M."/>
            <person name="Fiers M.W.E.J."/>
            <person name="Stiekema W."/>
            <person name="Klein Lankhorst R.M."/>
            <person name="Bron P.A."/>
            <person name="Hoffer S.M."/>
            <person name="Nierop Groot M.N."/>
            <person name="Kerkhoven R."/>
            <person name="De Vries M."/>
            <person name="Ursing B."/>
            <person name="De Vos W.M."/>
            <person name="Siezen R.J."/>
        </authorList>
    </citation>
    <scope>NUCLEOTIDE SEQUENCE [LARGE SCALE GENOMIC DNA]</scope>
    <source>
        <strain>ATCC BAA-793 / NCIMB 8826 / WCFS1</strain>
    </source>
</reference>
<reference key="2">
    <citation type="journal article" date="2012" name="J. Bacteriol.">
        <title>Complete resequencing and reannotation of the Lactobacillus plantarum WCFS1 genome.</title>
        <authorList>
            <person name="Siezen R.J."/>
            <person name="Francke C."/>
            <person name="Renckens B."/>
            <person name="Boekhorst J."/>
            <person name="Wels M."/>
            <person name="Kleerebezem M."/>
            <person name="van Hijum S.A."/>
        </authorList>
    </citation>
    <scope>NUCLEOTIDE SEQUENCE [LARGE SCALE GENOMIC DNA]</scope>
    <scope>GENOME REANNOTATION</scope>
    <source>
        <strain>ATCC BAA-793 / NCIMB 8826 / WCFS1</strain>
    </source>
</reference>
<sequence length="374" mass="42438">MYLENLVLHDFRNYADLTINFSQGVNVLLGENAQGKTNLLEAIYVLALTRSHRTANDKELIRWQTTTATLQGRLHKSTGAVPLELELGRRGKRAKVNHLEQAKLSQYVGNLNVIVFAPEDLSIVKGAPAVRRRFMDMEFGQMSPKYLYNLSQYRTILKQRNQYLRQLNRQQAKDKVYLGVLSDQLAAFGAEIIHKRLQLLQQLEKWAQAVHSEITQEQEQLTFHYVTQVPTADQTSVDHIYQTLQALYQQQQAKEIFQGTTLLGPHRDDLQFGVNGKNVQTFGSQGQQRTTALSVKLAEIDLMKAETGEYPVLLLDDVLSELDAARQTHLLTAIQDKVQTFLTTPSLDGVARKLINAPKVFEVSHGTLHEEEPH</sequence>
<gene>
    <name evidence="1" type="primary">recF</name>
    <name type="ordered locus">lp_0005</name>
</gene>
<proteinExistence type="inferred from homology"/>
<name>RECF_LACPL</name>
<comment type="function">
    <text evidence="1">The RecF protein is involved in DNA metabolism; it is required for DNA replication and normal SOS inducibility. RecF binds preferentially to single-stranded, linear DNA. It also seems to bind ATP.</text>
</comment>
<comment type="subcellular location">
    <subcellularLocation>
        <location evidence="1">Cytoplasm</location>
    </subcellularLocation>
</comment>
<comment type="similarity">
    <text evidence="1">Belongs to the RecF family.</text>
</comment>
<evidence type="ECO:0000255" key="1">
    <source>
        <dbReference type="HAMAP-Rule" id="MF_00365"/>
    </source>
</evidence>
<protein>
    <recommendedName>
        <fullName evidence="1">DNA replication and repair protein RecF</fullName>
    </recommendedName>
</protein>
<keyword id="KW-0067">ATP-binding</keyword>
<keyword id="KW-0963">Cytoplasm</keyword>
<keyword id="KW-0227">DNA damage</keyword>
<keyword id="KW-0234">DNA repair</keyword>
<keyword id="KW-0235">DNA replication</keyword>
<keyword id="KW-0238">DNA-binding</keyword>
<keyword id="KW-0547">Nucleotide-binding</keyword>
<keyword id="KW-1185">Reference proteome</keyword>
<keyword id="KW-0742">SOS response</keyword>